<comment type="catalytic activity">
    <reaction evidence="1">
        <text>beta-D-fructose 1,6-bisphosphate + H2O = beta-D-fructose 6-phosphate + phosphate</text>
        <dbReference type="Rhea" id="RHEA:11064"/>
        <dbReference type="ChEBI" id="CHEBI:15377"/>
        <dbReference type="ChEBI" id="CHEBI:32966"/>
        <dbReference type="ChEBI" id="CHEBI:43474"/>
        <dbReference type="ChEBI" id="CHEBI:57634"/>
        <dbReference type="EC" id="3.1.3.11"/>
    </reaction>
</comment>
<comment type="cofactor">
    <cofactor evidence="1">
        <name>Mg(2+)</name>
        <dbReference type="ChEBI" id="CHEBI:18420"/>
    </cofactor>
    <text evidence="1">Binds 2 magnesium ions per subunit.</text>
</comment>
<comment type="pathway">
    <text evidence="1">Carbohydrate biosynthesis; gluconeogenesis.</text>
</comment>
<comment type="subunit">
    <text evidence="1">Homotetramer.</text>
</comment>
<comment type="subcellular location">
    <subcellularLocation>
        <location evidence="1">Cytoplasm</location>
    </subcellularLocation>
</comment>
<comment type="similarity">
    <text evidence="1">Belongs to the FBPase class 1 family.</text>
</comment>
<name>F16A2_ALBFT</name>
<protein>
    <recommendedName>
        <fullName evidence="1">Fructose-1,6-bisphosphatase class 1 2</fullName>
        <shortName evidence="1">FBPase class 1 2</shortName>
        <ecNumber evidence="1">3.1.3.11</ecNumber>
    </recommendedName>
    <alternativeName>
        <fullName evidence="1">D-fructose-1,6-bisphosphate 1-phosphohydrolase class 1 2</fullName>
    </alternativeName>
</protein>
<sequence>MNKRISLTRYLVEQQRMEGHIPAQLRLLLEVVARACKRISLTVNKGALGGVLGSAETENIQGEMQKKLDIIANEVLIEANEWGGHLAAMASEEMDGIYIVPNRYPQGEYLLMFDPLDGSSNIDVNVSIGTIFSVLVKPDGQGVLEQDFLQPGNQQVAAGYCVFGPQTTLVLTVGDGVAMFTLDREQGSFILTAENMRVPVDTQEFAVNMSNQRHWDTPVKRYIDECLQGKDGPRGKDFNMRWVGSMVADVHRILTRGGVFLYPWDKREPEKPGKLRLMYEANPMAWLIEQAGGAASTGKQRILDLQPGKLHERVSVFLGSKNEVERIARYHGEA</sequence>
<evidence type="ECO:0000255" key="1">
    <source>
        <dbReference type="HAMAP-Rule" id="MF_01855"/>
    </source>
</evidence>
<keyword id="KW-0119">Carbohydrate metabolism</keyword>
<keyword id="KW-0963">Cytoplasm</keyword>
<keyword id="KW-0378">Hydrolase</keyword>
<keyword id="KW-0460">Magnesium</keyword>
<keyword id="KW-0479">Metal-binding</keyword>
<keyword id="KW-1185">Reference proteome</keyword>
<organism>
    <name type="scientific">Albidiferax ferrireducens (strain ATCC BAA-621 / DSM 15236 / T118)</name>
    <name type="common">Rhodoferax ferrireducens</name>
    <dbReference type="NCBI Taxonomy" id="338969"/>
    <lineage>
        <taxon>Bacteria</taxon>
        <taxon>Pseudomonadati</taxon>
        <taxon>Pseudomonadota</taxon>
        <taxon>Betaproteobacteria</taxon>
        <taxon>Burkholderiales</taxon>
        <taxon>Comamonadaceae</taxon>
        <taxon>Rhodoferax</taxon>
    </lineage>
</organism>
<accession>Q21UY4</accession>
<dbReference type="EC" id="3.1.3.11" evidence="1"/>
<dbReference type="EMBL" id="CP000267">
    <property type="protein sequence ID" value="ABD70419.1"/>
    <property type="molecule type" value="Genomic_DNA"/>
</dbReference>
<dbReference type="RefSeq" id="WP_011464985.1">
    <property type="nucleotide sequence ID" value="NC_007908.1"/>
</dbReference>
<dbReference type="SMR" id="Q21UY4"/>
<dbReference type="STRING" id="338969.Rfer_2704"/>
<dbReference type="KEGG" id="rfr:Rfer_2704"/>
<dbReference type="eggNOG" id="COG0158">
    <property type="taxonomic scope" value="Bacteria"/>
</dbReference>
<dbReference type="HOGENOM" id="CLU_039977_0_0_4"/>
<dbReference type="OrthoDB" id="9806756at2"/>
<dbReference type="UniPathway" id="UPA00138"/>
<dbReference type="Proteomes" id="UP000008332">
    <property type="component" value="Chromosome"/>
</dbReference>
<dbReference type="GO" id="GO:0005829">
    <property type="term" value="C:cytosol"/>
    <property type="evidence" value="ECO:0007669"/>
    <property type="project" value="TreeGrafter"/>
</dbReference>
<dbReference type="GO" id="GO:0042132">
    <property type="term" value="F:fructose 1,6-bisphosphate 1-phosphatase activity"/>
    <property type="evidence" value="ECO:0007669"/>
    <property type="project" value="UniProtKB-UniRule"/>
</dbReference>
<dbReference type="GO" id="GO:0000287">
    <property type="term" value="F:magnesium ion binding"/>
    <property type="evidence" value="ECO:0007669"/>
    <property type="project" value="UniProtKB-UniRule"/>
</dbReference>
<dbReference type="GO" id="GO:0030388">
    <property type="term" value="P:fructose 1,6-bisphosphate metabolic process"/>
    <property type="evidence" value="ECO:0007669"/>
    <property type="project" value="TreeGrafter"/>
</dbReference>
<dbReference type="GO" id="GO:0006002">
    <property type="term" value="P:fructose 6-phosphate metabolic process"/>
    <property type="evidence" value="ECO:0007669"/>
    <property type="project" value="TreeGrafter"/>
</dbReference>
<dbReference type="GO" id="GO:0006000">
    <property type="term" value="P:fructose metabolic process"/>
    <property type="evidence" value="ECO:0007669"/>
    <property type="project" value="TreeGrafter"/>
</dbReference>
<dbReference type="GO" id="GO:0006094">
    <property type="term" value="P:gluconeogenesis"/>
    <property type="evidence" value="ECO:0007669"/>
    <property type="project" value="UniProtKB-UniRule"/>
</dbReference>
<dbReference type="GO" id="GO:0005986">
    <property type="term" value="P:sucrose biosynthetic process"/>
    <property type="evidence" value="ECO:0007669"/>
    <property type="project" value="TreeGrafter"/>
</dbReference>
<dbReference type="CDD" id="cd00354">
    <property type="entry name" value="FBPase"/>
    <property type="match status" value="1"/>
</dbReference>
<dbReference type="FunFam" id="3.30.540.10:FF:000006">
    <property type="entry name" value="Fructose-1,6-bisphosphatase class 1"/>
    <property type="match status" value="1"/>
</dbReference>
<dbReference type="FunFam" id="3.40.190.80:FF:000011">
    <property type="entry name" value="Fructose-1,6-bisphosphatase class 1"/>
    <property type="match status" value="1"/>
</dbReference>
<dbReference type="Gene3D" id="3.40.190.80">
    <property type="match status" value="1"/>
</dbReference>
<dbReference type="Gene3D" id="3.30.540.10">
    <property type="entry name" value="Fructose-1,6-Bisphosphatase, subunit A, domain 1"/>
    <property type="match status" value="1"/>
</dbReference>
<dbReference type="HAMAP" id="MF_01855">
    <property type="entry name" value="FBPase_class1"/>
    <property type="match status" value="1"/>
</dbReference>
<dbReference type="InterPro" id="IPR044015">
    <property type="entry name" value="FBPase_C_dom"/>
</dbReference>
<dbReference type="InterPro" id="IPR000146">
    <property type="entry name" value="FBPase_class-1"/>
</dbReference>
<dbReference type="InterPro" id="IPR033391">
    <property type="entry name" value="FBPase_N"/>
</dbReference>
<dbReference type="InterPro" id="IPR028343">
    <property type="entry name" value="FBPtase"/>
</dbReference>
<dbReference type="NCBIfam" id="NF006778">
    <property type="entry name" value="PRK09293.1-1"/>
    <property type="match status" value="1"/>
</dbReference>
<dbReference type="NCBIfam" id="NF006779">
    <property type="entry name" value="PRK09293.1-3"/>
    <property type="match status" value="1"/>
</dbReference>
<dbReference type="NCBIfam" id="NF006780">
    <property type="entry name" value="PRK09293.1-4"/>
    <property type="match status" value="1"/>
</dbReference>
<dbReference type="PANTHER" id="PTHR11556">
    <property type="entry name" value="FRUCTOSE-1,6-BISPHOSPHATASE-RELATED"/>
    <property type="match status" value="1"/>
</dbReference>
<dbReference type="PANTHER" id="PTHR11556:SF35">
    <property type="entry name" value="SEDOHEPTULOSE-1,7-BISPHOSPHATASE, CHLOROPLASTIC"/>
    <property type="match status" value="1"/>
</dbReference>
<dbReference type="Pfam" id="PF00316">
    <property type="entry name" value="FBPase"/>
    <property type="match status" value="1"/>
</dbReference>
<dbReference type="Pfam" id="PF18913">
    <property type="entry name" value="FBPase_C"/>
    <property type="match status" value="1"/>
</dbReference>
<dbReference type="PIRSF" id="PIRSF500210">
    <property type="entry name" value="FBPtase"/>
    <property type="match status" value="1"/>
</dbReference>
<dbReference type="PIRSF" id="PIRSF000904">
    <property type="entry name" value="FBPtase_SBPase"/>
    <property type="match status" value="1"/>
</dbReference>
<dbReference type="PRINTS" id="PR00115">
    <property type="entry name" value="F16BPHPHTASE"/>
</dbReference>
<dbReference type="SUPFAM" id="SSF56655">
    <property type="entry name" value="Carbohydrate phosphatase"/>
    <property type="match status" value="1"/>
</dbReference>
<feature type="chain" id="PRO_0000364673" description="Fructose-1,6-bisphosphatase class 1 2">
    <location>
        <begin position="1"/>
        <end position="334"/>
    </location>
</feature>
<feature type="binding site" evidence="1">
    <location>
        <position position="92"/>
    </location>
    <ligand>
        <name>Mg(2+)</name>
        <dbReference type="ChEBI" id="CHEBI:18420"/>
        <label>1</label>
    </ligand>
</feature>
<feature type="binding site" evidence="1">
    <location>
        <position position="114"/>
    </location>
    <ligand>
        <name>Mg(2+)</name>
        <dbReference type="ChEBI" id="CHEBI:18420"/>
        <label>1</label>
    </ligand>
</feature>
<feature type="binding site" evidence="1">
    <location>
        <position position="114"/>
    </location>
    <ligand>
        <name>Mg(2+)</name>
        <dbReference type="ChEBI" id="CHEBI:18420"/>
        <label>2</label>
    </ligand>
</feature>
<feature type="binding site" evidence="1">
    <location>
        <position position="116"/>
    </location>
    <ligand>
        <name>Mg(2+)</name>
        <dbReference type="ChEBI" id="CHEBI:18420"/>
        <label>1</label>
    </ligand>
</feature>
<feature type="binding site" evidence="1">
    <location>
        <begin position="117"/>
        <end position="120"/>
    </location>
    <ligand>
        <name>substrate</name>
    </ligand>
</feature>
<feature type="binding site" evidence="1">
    <location>
        <position position="117"/>
    </location>
    <ligand>
        <name>Mg(2+)</name>
        <dbReference type="ChEBI" id="CHEBI:18420"/>
        <label>2</label>
    </ligand>
</feature>
<feature type="binding site" evidence="1">
    <location>
        <position position="208"/>
    </location>
    <ligand>
        <name>substrate</name>
    </ligand>
</feature>
<feature type="binding site" evidence="1">
    <location>
        <position position="274"/>
    </location>
    <ligand>
        <name>substrate</name>
    </ligand>
</feature>
<feature type="binding site" evidence="1">
    <location>
        <position position="280"/>
    </location>
    <ligand>
        <name>Mg(2+)</name>
        <dbReference type="ChEBI" id="CHEBI:18420"/>
        <label>2</label>
    </ligand>
</feature>
<gene>
    <name evidence="1" type="primary">fbp2</name>
    <name type="ordered locus">Rfer_2704</name>
</gene>
<proteinExistence type="inferred from homology"/>
<reference key="1">
    <citation type="submission" date="2006-02" db="EMBL/GenBank/DDBJ databases">
        <title>Complete sequence of chromosome of Rhodoferax ferrireducens DSM 15236.</title>
        <authorList>
            <person name="Copeland A."/>
            <person name="Lucas S."/>
            <person name="Lapidus A."/>
            <person name="Barry K."/>
            <person name="Detter J.C."/>
            <person name="Glavina del Rio T."/>
            <person name="Hammon N."/>
            <person name="Israni S."/>
            <person name="Pitluck S."/>
            <person name="Brettin T."/>
            <person name="Bruce D."/>
            <person name="Han C."/>
            <person name="Tapia R."/>
            <person name="Gilna P."/>
            <person name="Kiss H."/>
            <person name="Schmutz J."/>
            <person name="Larimer F."/>
            <person name="Land M."/>
            <person name="Kyrpides N."/>
            <person name="Ivanova N."/>
            <person name="Richardson P."/>
        </authorList>
    </citation>
    <scope>NUCLEOTIDE SEQUENCE [LARGE SCALE GENOMIC DNA]</scope>
    <source>
        <strain>ATCC BAA-621 / DSM 15236 / T118</strain>
    </source>
</reference>